<reference key="1">
    <citation type="journal article" date="2002" name="Peptides">
        <title>Bradykinins and their precursor cDNAs from the skin of the fire-bellied toad (Bombina orientalis).</title>
        <authorList>
            <person name="Chen T."/>
            <person name="Orr D.F."/>
            <person name="Bjourson A.J."/>
            <person name="McClean S."/>
            <person name="O'Rourke M."/>
            <person name="Hirst D.G."/>
            <person name="Rao P."/>
            <person name="Shaw C."/>
        </authorList>
    </citation>
    <scope>NUCLEOTIDE SEQUENCE [MRNA]</scope>
    <scope>PROTEIN SEQUENCE OF 51-59; 79-87; 107-115 AND 135-143</scope>
    <scope>CHARACTERIZATION</scope>
    <source>
        <tissue>Skin</tissue>
        <tissue>Skin secretion</tissue>
    </source>
</reference>
<name>BRK1_BOMOR</name>
<evidence type="ECO:0000255" key="1"/>
<evidence type="ECO:0000305" key="2"/>
<accession>P83060</accession>
<accession>Q90W16</accession>
<organism evidence="2">
    <name type="scientific">Bombina orientalis</name>
    <name type="common">Oriental fire-bellied toad</name>
    <dbReference type="NCBI Taxonomy" id="8346"/>
    <lineage>
        <taxon>Eukaryota</taxon>
        <taxon>Metazoa</taxon>
        <taxon>Chordata</taxon>
        <taxon>Craniata</taxon>
        <taxon>Vertebrata</taxon>
        <taxon>Euteleostomi</taxon>
        <taxon>Amphibia</taxon>
        <taxon>Batrachia</taxon>
        <taxon>Anura</taxon>
        <taxon>Bombinatoridae</taxon>
        <taxon>Bombina</taxon>
    </lineage>
</organism>
<feature type="signal peptide" evidence="1">
    <location>
        <begin position="1"/>
        <end position="23"/>
    </location>
</feature>
<feature type="chain" id="PRO_0000003429" description="Kininogen-1">
    <location>
        <begin position="24"/>
        <end position="167"/>
    </location>
</feature>
<feature type="peptide" id="PRO_0000003430" description="Bradykinin">
    <location>
        <begin position="51"/>
        <end position="59"/>
    </location>
</feature>
<feature type="peptide" id="PRO_0000003431" description="Bradykinin">
    <location>
        <begin position="79"/>
        <end position="87"/>
    </location>
</feature>
<feature type="peptide" id="PRO_0000003432" description="Bradykinin">
    <location>
        <begin position="107"/>
        <end position="115"/>
    </location>
</feature>
<feature type="peptide" id="PRO_0000003433" description="Bradykinin">
    <location>
        <begin position="135"/>
        <end position="143"/>
    </location>
</feature>
<sequence>MRLWFCLSFFIILCLEHFPGTLADERNVPESEEKTEQFLRDLSEISRLQRRPPGFSPFRGKFHSQSLRDLSEISRLQRRPPGFSPFRGKFHSQSMRDLSEISRLQRRPPGFSPFRGKFHSQSMRDLSEISRLQRRPPGFSPFRGKFHSQSLRGLSEIKRLKTTHKIH</sequence>
<comment type="function">
    <text>Vasodilator. Bradykinin produces in vitro relaxation of rat arterial smooth muscle and constriction of intestinal smooth muscle. May target bradykinin receptors (BDKRB).</text>
</comment>
<comment type="subcellular location">
    <subcellularLocation>
        <location evidence="2">Secreted</location>
    </subcellularLocation>
</comment>
<comment type="tissue specificity">
    <text>Expressed by the skin glands.</text>
</comment>
<comment type="similarity">
    <text evidence="2">Belongs to the bradykinin-related peptide family.</text>
</comment>
<protein>
    <recommendedName>
        <fullName>Kininogen-1</fullName>
    </recommendedName>
    <alternativeName>
        <fullName>BOK-1</fullName>
    </alternativeName>
    <component>
        <recommendedName>
            <fullName>Bradykinin</fullName>
        </recommendedName>
    </component>
</protein>
<proteinExistence type="evidence at protein level"/>
<keyword id="KW-0878">Amphibian defense peptide</keyword>
<keyword id="KW-0903">Direct protein sequencing</keyword>
<keyword id="KW-1213">G-protein coupled receptor impairing toxin</keyword>
<keyword id="KW-0677">Repeat</keyword>
<keyword id="KW-0964">Secreted</keyword>
<keyword id="KW-0732">Signal</keyword>
<keyword id="KW-0800">Toxin</keyword>
<keyword id="KW-0838">Vasoactive</keyword>
<keyword id="KW-0840">Vasodilator</keyword>
<dbReference type="EMBL" id="AJ316578">
    <property type="protein sequence ID" value="CAC69834.1"/>
    <property type="molecule type" value="mRNA"/>
</dbReference>
<dbReference type="PIR" id="A61361">
    <property type="entry name" value="A61361"/>
</dbReference>
<dbReference type="GO" id="GO:0005576">
    <property type="term" value="C:extracellular region"/>
    <property type="evidence" value="ECO:0007669"/>
    <property type="project" value="UniProtKB-SubCell"/>
</dbReference>
<dbReference type="GO" id="GO:0005179">
    <property type="term" value="F:hormone activity"/>
    <property type="evidence" value="ECO:0007669"/>
    <property type="project" value="InterPro"/>
</dbReference>
<dbReference type="GO" id="GO:0090729">
    <property type="term" value="F:toxin activity"/>
    <property type="evidence" value="ECO:0007669"/>
    <property type="project" value="UniProtKB-KW"/>
</dbReference>
<dbReference type="GO" id="GO:0006952">
    <property type="term" value="P:defense response"/>
    <property type="evidence" value="ECO:0007669"/>
    <property type="project" value="UniProtKB-KW"/>
</dbReference>
<dbReference type="GO" id="GO:0042311">
    <property type="term" value="P:vasodilation"/>
    <property type="evidence" value="ECO:0007669"/>
    <property type="project" value="UniProtKB-KW"/>
</dbReference>
<dbReference type="InterPro" id="IPR009608">
    <property type="entry name" value="Bradykinin"/>
</dbReference>
<dbReference type="Pfam" id="PF06753">
    <property type="entry name" value="Bradykinin"/>
    <property type="match status" value="4"/>
</dbReference>